<feature type="chain" id="PRO_0000456009" description="Methyltransferase pgmE">
    <location>
        <begin position="1"/>
        <end position="335"/>
    </location>
</feature>
<accession>A0A1W5SKE9</accession>
<protein>
    <recommendedName>
        <fullName evidence="4">Methyltransferase pgmE</fullName>
        <ecNumber evidence="6">2.1.1.-</ecNumber>
    </recommendedName>
    <alternativeName>
        <fullName evidence="4">Pigmented naphthoquinones biosynthesis cluster protein E</fullName>
    </alternativeName>
</protein>
<comment type="function">
    <text evidence="1 2 6">Methyltransferase; part of the gene cluster that mediates the biosynthesis of pleosporalin A, ascomycone A, as well as a third cryptic naphthoquinone derived pigment, all responsible for the coloration of conidia (PubMed:28471414, PubMed:35351612). Essential for the production of pleosporalin A, but not the 2 other final products (PubMed:35351612). The pathway begins with the biosynthesis of the cyclized heptaketide 3-acetonyl-1,6,8-trihydroxy-2-naphthaldehyde by the NR-PKS pgmA. The C-6 hydroxyl group is further methylated by the O-methyltransferase pgmB to yield fusarubinaldehyde which is in turn oxidized by the cytochrome P450 monooxygenase pgmC at C-9. The C-1 hydroxyl group is then methylated spontaneously. Although pgmE, pgmD and pgmH are essential for the production of pleosporalin A, it is not the case for the 2 other final products and it remains difficult to assign a specific function to each enzyme. PgmF and pgmG seem not to be involved in pigment biosynthesis although they were regulated by the cluster-specific transcription factor pgmR (Probable) (PubMed:35351612).</text>
</comment>
<comment type="pathway">
    <text evidence="2">Pigment biosynthesis.</text>
</comment>
<comment type="pathway">
    <text evidence="2">Secondary metabolite biosynthesis.</text>
</comment>
<comment type="induction">
    <text evidence="1 2">Expression is significantly up-regulated at the end of late growth phase, in the presence of Butyrolactone I (PubMed:28471414). Expression is positively regulated by the pgm cluster-specific transcription factor pgmR (PubMed:35351612).</text>
</comment>
<comment type="disruption phenotype">
    <text evidence="2">Does not affect the methylation of the naphthoquinones derived pigments and only abolishes the production of pleosporalin A but not of the 2 other final products.</text>
</comment>
<comment type="similarity">
    <text evidence="5">Belongs to the methyltransferase superfamily.</text>
</comment>
<gene>
    <name evidence="3" type="primary">pgmE</name>
</gene>
<dbReference type="EC" id="2.1.1.-" evidence="6"/>
<dbReference type="EMBL" id="KX470749">
    <property type="protein sequence ID" value="ARB51366.1"/>
    <property type="molecule type" value="mRNA"/>
</dbReference>
<dbReference type="SMR" id="A0A1W5SKE9"/>
<dbReference type="VEuPathDB" id="FungiDB:ATEG_06208"/>
<dbReference type="GO" id="GO:0008757">
    <property type="term" value="F:S-adenosylmethionine-dependent methyltransferase activity"/>
    <property type="evidence" value="ECO:0007669"/>
    <property type="project" value="InterPro"/>
</dbReference>
<dbReference type="GO" id="GO:0032259">
    <property type="term" value="P:methylation"/>
    <property type="evidence" value="ECO:0007669"/>
    <property type="project" value="UniProtKB-KW"/>
</dbReference>
<dbReference type="CDD" id="cd02440">
    <property type="entry name" value="AdoMet_MTases"/>
    <property type="match status" value="1"/>
</dbReference>
<dbReference type="Gene3D" id="3.40.50.150">
    <property type="entry name" value="Vaccinia Virus protein VP39"/>
    <property type="match status" value="1"/>
</dbReference>
<dbReference type="InterPro" id="IPR051052">
    <property type="entry name" value="Diverse_substrate_MTase"/>
</dbReference>
<dbReference type="InterPro" id="IPR013216">
    <property type="entry name" value="Methyltransf_11"/>
</dbReference>
<dbReference type="InterPro" id="IPR029063">
    <property type="entry name" value="SAM-dependent_MTases_sf"/>
</dbReference>
<dbReference type="PANTHER" id="PTHR44942">
    <property type="entry name" value="METHYLTRANSF_11 DOMAIN-CONTAINING PROTEIN"/>
    <property type="match status" value="1"/>
</dbReference>
<dbReference type="PANTHER" id="PTHR44942:SF4">
    <property type="entry name" value="METHYLTRANSFERASE TYPE 11 DOMAIN-CONTAINING PROTEIN"/>
    <property type="match status" value="1"/>
</dbReference>
<dbReference type="Pfam" id="PF08241">
    <property type="entry name" value="Methyltransf_11"/>
    <property type="match status" value="1"/>
</dbReference>
<dbReference type="SUPFAM" id="SSF53335">
    <property type="entry name" value="S-adenosyl-L-methionine-dependent methyltransferases"/>
    <property type="match status" value="1"/>
</dbReference>
<proteinExistence type="evidence at transcript level"/>
<keyword id="KW-0489">Methyltransferase</keyword>
<keyword id="KW-0949">S-adenosyl-L-methionine</keyword>
<keyword id="KW-0808">Transferase</keyword>
<evidence type="ECO:0000269" key="1">
    <source>
    </source>
</evidence>
<evidence type="ECO:0000269" key="2">
    <source>
    </source>
</evidence>
<evidence type="ECO:0000303" key="3">
    <source>
    </source>
</evidence>
<evidence type="ECO:0000303" key="4">
    <source>
    </source>
</evidence>
<evidence type="ECO:0000305" key="5"/>
<evidence type="ECO:0000305" key="6">
    <source>
    </source>
</evidence>
<name>PGME_ASPTE</name>
<reference key="1">
    <citation type="journal article" date="2017" name="Microorganisms">
        <title>Melanisation of Aspergillus terreus-is butyrolactone I involved in the regulation of both DOPA and DHN types of pigments in submerged culture?</title>
        <authorList>
            <person name="Palonen E.K."/>
            <person name="Raina S."/>
            <person name="Brandt A."/>
            <person name="Meriluoto J."/>
            <person name="Keshavarz T."/>
            <person name="Soini J.T."/>
        </authorList>
    </citation>
    <scope>NUCLEOTIDE SEQUENCE [GENOMIC DNA]</scope>
    <scope>IDENTIFICATION</scope>
    <scope>FUNCTION</scope>
    <scope>INDUCTION</scope>
    <source>
        <strain>MUCL38669</strain>
    </source>
</reference>
<reference key="2">
    <citation type="journal article" date="2022" name="Fungal Genet. Biol.">
        <title>Identification of a polyketide biosynthesis gene cluster by transcriptional regulator activation in Aspergillus terreus.</title>
        <authorList>
            <person name="Tang S."/>
            <person name="Men P."/>
            <person name="Zhang W."/>
            <person name="Li H."/>
            <person name="Li Z."/>
            <person name="Huang X."/>
            <person name="Lu X."/>
        </authorList>
    </citation>
    <scope>FUNCTION</scope>
    <scope>INDUCTION</scope>
    <scope>DISRUPTION PHENOTYPE</scope>
    <scope>PATHWAY</scope>
</reference>
<sequence length="335" mass="37741">MAETATRSDSGMFWKATTYKEQYWDGYLAARPKYSSDFYERIVDYYKAHNPSPPTPTVAHDVGTGPGQVASELCKYFDKVIASDPNSTHLAVASARNEKSGLNHKITWTEVSAEDLNSHYPAGSASFLAAAECLPLLDVPRALNTFAHLLHPNGTLAAWFYGRPVFSEPTVAAKCQPILNDIIDLTFEKVIKGAPPAHKTTWKRSTDTLYSFLDNVTFPAETWRDVYRFKWNPHLPLSVVGPNACDYPIEPSSCIDPEREKVVEAKDPHFWEEVWDISEVRRFVECLLPNIEDLKSKGVYDHVEVKYKELEEAMGGDNAKKEITWPVVLILATRV</sequence>
<organism>
    <name type="scientific">Aspergillus terreus</name>
    <dbReference type="NCBI Taxonomy" id="33178"/>
    <lineage>
        <taxon>Eukaryota</taxon>
        <taxon>Fungi</taxon>
        <taxon>Dikarya</taxon>
        <taxon>Ascomycota</taxon>
        <taxon>Pezizomycotina</taxon>
        <taxon>Eurotiomycetes</taxon>
        <taxon>Eurotiomycetidae</taxon>
        <taxon>Eurotiales</taxon>
        <taxon>Aspergillaceae</taxon>
        <taxon>Aspergillus</taxon>
        <taxon>Aspergillus subgen. Circumdati</taxon>
    </lineage>
</organism>